<keyword id="KW-0233">DNA recombination</keyword>
<keyword id="KW-0238">DNA-binding</keyword>
<keyword id="KW-0804">Transcription</keyword>
<keyword id="KW-0805">Transcription regulation</keyword>
<keyword id="KW-0810">Translation regulation</keyword>
<comment type="function">
    <text evidence="1">This protein is one of the two subunits of integration host factor, a specific DNA-binding protein that functions in genetic recombination as well as in transcriptional and translational control.</text>
</comment>
<comment type="subunit">
    <text evidence="1">Heterodimer of an alpha and a beta chain.</text>
</comment>
<comment type="similarity">
    <text evidence="1">Belongs to the bacterial histone-like protein family.</text>
</comment>
<evidence type="ECO:0000255" key="1">
    <source>
        <dbReference type="HAMAP-Rule" id="MF_00380"/>
    </source>
</evidence>
<evidence type="ECO:0000256" key="2">
    <source>
        <dbReference type="SAM" id="MobiDB-lite"/>
    </source>
</evidence>
<organism>
    <name type="scientific">Escherichia coli O81 (strain ED1a)</name>
    <dbReference type="NCBI Taxonomy" id="585397"/>
    <lineage>
        <taxon>Bacteria</taxon>
        <taxon>Pseudomonadati</taxon>
        <taxon>Pseudomonadota</taxon>
        <taxon>Gammaproteobacteria</taxon>
        <taxon>Enterobacterales</taxon>
        <taxon>Enterobacteriaceae</taxon>
        <taxon>Escherichia</taxon>
    </lineage>
</organism>
<name>IHFA_ECO81</name>
<gene>
    <name evidence="1" type="primary">ihfA</name>
    <name evidence="1" type="synonym">himA</name>
    <name type="ordered locus">ECED1_1914</name>
</gene>
<sequence length="99" mass="11354">MALTKAEMSEYLFDKLGLSKRDAKELVELFFEEIRRALENGEQVKLSGFGNFDLRDKNQRPGRNPKTGEDIPITARRVVTFRPGQKLKSRVENASPKDE</sequence>
<accession>B7MVJ1</accession>
<feature type="chain" id="PRO_1000190424" description="Integration host factor subunit alpha">
    <location>
        <begin position="1"/>
        <end position="99"/>
    </location>
</feature>
<feature type="region of interest" description="Disordered" evidence="2">
    <location>
        <begin position="49"/>
        <end position="73"/>
    </location>
</feature>
<proteinExistence type="inferred from homology"/>
<dbReference type="EMBL" id="CU928162">
    <property type="protein sequence ID" value="CAR08107.2"/>
    <property type="molecule type" value="Genomic_DNA"/>
</dbReference>
<dbReference type="RefSeq" id="WP_001229265.1">
    <property type="nucleotide sequence ID" value="NC_011745.1"/>
</dbReference>
<dbReference type="SMR" id="B7MVJ1"/>
<dbReference type="GeneID" id="93775925"/>
<dbReference type="KEGG" id="ecq:ECED1_1914"/>
<dbReference type="HOGENOM" id="CLU_105066_1_3_6"/>
<dbReference type="Proteomes" id="UP000000748">
    <property type="component" value="Chromosome"/>
</dbReference>
<dbReference type="GO" id="GO:0005829">
    <property type="term" value="C:cytosol"/>
    <property type="evidence" value="ECO:0007669"/>
    <property type="project" value="TreeGrafter"/>
</dbReference>
<dbReference type="GO" id="GO:0003677">
    <property type="term" value="F:DNA binding"/>
    <property type="evidence" value="ECO:0007669"/>
    <property type="project" value="UniProtKB-UniRule"/>
</dbReference>
<dbReference type="GO" id="GO:0030527">
    <property type="term" value="F:structural constituent of chromatin"/>
    <property type="evidence" value="ECO:0007669"/>
    <property type="project" value="InterPro"/>
</dbReference>
<dbReference type="GO" id="GO:0006310">
    <property type="term" value="P:DNA recombination"/>
    <property type="evidence" value="ECO:0007669"/>
    <property type="project" value="UniProtKB-UniRule"/>
</dbReference>
<dbReference type="GO" id="GO:0009893">
    <property type="term" value="P:positive regulation of metabolic process"/>
    <property type="evidence" value="ECO:0007669"/>
    <property type="project" value="UniProtKB-ARBA"/>
</dbReference>
<dbReference type="GO" id="GO:0006355">
    <property type="term" value="P:regulation of DNA-templated transcription"/>
    <property type="evidence" value="ECO:0007669"/>
    <property type="project" value="UniProtKB-UniRule"/>
</dbReference>
<dbReference type="GO" id="GO:0006417">
    <property type="term" value="P:regulation of translation"/>
    <property type="evidence" value="ECO:0007669"/>
    <property type="project" value="UniProtKB-UniRule"/>
</dbReference>
<dbReference type="CDD" id="cd13835">
    <property type="entry name" value="IHF_A"/>
    <property type="match status" value="1"/>
</dbReference>
<dbReference type="FunFam" id="4.10.520.10:FF:000002">
    <property type="entry name" value="Integration host factor subunit alpha"/>
    <property type="match status" value="1"/>
</dbReference>
<dbReference type="Gene3D" id="4.10.520.10">
    <property type="entry name" value="IHF-like DNA-binding proteins"/>
    <property type="match status" value="1"/>
</dbReference>
<dbReference type="HAMAP" id="MF_00380">
    <property type="entry name" value="IHF_alpha"/>
    <property type="match status" value="1"/>
</dbReference>
<dbReference type="InterPro" id="IPR000119">
    <property type="entry name" value="Hist_DNA-bd"/>
</dbReference>
<dbReference type="InterPro" id="IPR020816">
    <property type="entry name" value="Histone-like_DNA-bd_CS"/>
</dbReference>
<dbReference type="InterPro" id="IPR010992">
    <property type="entry name" value="IHF-like_DNA-bd_dom_sf"/>
</dbReference>
<dbReference type="InterPro" id="IPR005684">
    <property type="entry name" value="IHF_alpha"/>
</dbReference>
<dbReference type="NCBIfam" id="TIGR00987">
    <property type="entry name" value="himA"/>
    <property type="match status" value="1"/>
</dbReference>
<dbReference type="NCBIfam" id="NF001401">
    <property type="entry name" value="PRK00285.1"/>
    <property type="match status" value="1"/>
</dbReference>
<dbReference type="PANTHER" id="PTHR33175">
    <property type="entry name" value="DNA-BINDING PROTEIN HU"/>
    <property type="match status" value="1"/>
</dbReference>
<dbReference type="PANTHER" id="PTHR33175:SF2">
    <property type="entry name" value="INTEGRATION HOST FACTOR SUBUNIT ALPHA"/>
    <property type="match status" value="1"/>
</dbReference>
<dbReference type="Pfam" id="PF00216">
    <property type="entry name" value="Bac_DNA_binding"/>
    <property type="match status" value="1"/>
</dbReference>
<dbReference type="PRINTS" id="PR01727">
    <property type="entry name" value="DNABINDINGHU"/>
</dbReference>
<dbReference type="SMART" id="SM00411">
    <property type="entry name" value="BHL"/>
    <property type="match status" value="1"/>
</dbReference>
<dbReference type="SUPFAM" id="SSF47729">
    <property type="entry name" value="IHF-like DNA-binding proteins"/>
    <property type="match status" value="1"/>
</dbReference>
<dbReference type="PROSITE" id="PS00045">
    <property type="entry name" value="HISTONE_LIKE"/>
    <property type="match status" value="1"/>
</dbReference>
<protein>
    <recommendedName>
        <fullName evidence="1">Integration host factor subunit alpha</fullName>
        <shortName evidence="1">IHF-alpha</shortName>
    </recommendedName>
</protein>
<reference key="1">
    <citation type="journal article" date="2009" name="PLoS Genet.">
        <title>Organised genome dynamics in the Escherichia coli species results in highly diverse adaptive paths.</title>
        <authorList>
            <person name="Touchon M."/>
            <person name="Hoede C."/>
            <person name="Tenaillon O."/>
            <person name="Barbe V."/>
            <person name="Baeriswyl S."/>
            <person name="Bidet P."/>
            <person name="Bingen E."/>
            <person name="Bonacorsi S."/>
            <person name="Bouchier C."/>
            <person name="Bouvet O."/>
            <person name="Calteau A."/>
            <person name="Chiapello H."/>
            <person name="Clermont O."/>
            <person name="Cruveiller S."/>
            <person name="Danchin A."/>
            <person name="Diard M."/>
            <person name="Dossat C."/>
            <person name="Karoui M.E."/>
            <person name="Frapy E."/>
            <person name="Garry L."/>
            <person name="Ghigo J.M."/>
            <person name="Gilles A.M."/>
            <person name="Johnson J."/>
            <person name="Le Bouguenec C."/>
            <person name="Lescat M."/>
            <person name="Mangenot S."/>
            <person name="Martinez-Jehanne V."/>
            <person name="Matic I."/>
            <person name="Nassif X."/>
            <person name="Oztas S."/>
            <person name="Petit M.A."/>
            <person name="Pichon C."/>
            <person name="Rouy Z."/>
            <person name="Ruf C.S."/>
            <person name="Schneider D."/>
            <person name="Tourret J."/>
            <person name="Vacherie B."/>
            <person name="Vallenet D."/>
            <person name="Medigue C."/>
            <person name="Rocha E.P.C."/>
            <person name="Denamur E."/>
        </authorList>
    </citation>
    <scope>NUCLEOTIDE SEQUENCE [LARGE SCALE GENOMIC DNA]</scope>
    <source>
        <strain>ED1a</strain>
    </source>
</reference>